<accession>Q3ISN0</accession>
<organism>
    <name type="scientific">Natronomonas pharaonis (strain ATCC 35678 / DSM 2160 / CIP 103997 / JCM 8858 / NBRC 14720 / NCIMB 2260 / Gabara)</name>
    <name type="common">Halobacterium pharaonis</name>
    <dbReference type="NCBI Taxonomy" id="348780"/>
    <lineage>
        <taxon>Archaea</taxon>
        <taxon>Methanobacteriati</taxon>
        <taxon>Methanobacteriota</taxon>
        <taxon>Stenosarchaea group</taxon>
        <taxon>Halobacteria</taxon>
        <taxon>Halobacteriales</taxon>
        <taxon>Haloarculaceae</taxon>
        <taxon>Natronomonas</taxon>
    </lineage>
</organism>
<keyword id="KW-0963">Cytoplasm</keyword>
<keyword id="KW-0342">GTP-binding</keyword>
<keyword id="KW-0436">Ligase</keyword>
<keyword id="KW-0460">Magnesium</keyword>
<keyword id="KW-0479">Metal-binding</keyword>
<keyword id="KW-0547">Nucleotide-binding</keyword>
<keyword id="KW-0658">Purine biosynthesis</keyword>
<keyword id="KW-1185">Reference proteome</keyword>
<dbReference type="EC" id="6.3.4.4" evidence="1"/>
<dbReference type="EMBL" id="CR936257">
    <property type="protein sequence ID" value="CAI48856.1"/>
    <property type="molecule type" value="Genomic_DNA"/>
</dbReference>
<dbReference type="RefSeq" id="WP_011322490.1">
    <property type="nucleotide sequence ID" value="NC_007426.1"/>
</dbReference>
<dbReference type="SMR" id="Q3ISN0"/>
<dbReference type="STRING" id="348780.NP_1530A"/>
<dbReference type="EnsemblBacteria" id="CAI48856">
    <property type="protein sequence ID" value="CAI48856"/>
    <property type="gene ID" value="NP_1530A"/>
</dbReference>
<dbReference type="GeneID" id="3703066"/>
<dbReference type="KEGG" id="nph:NP_1530A"/>
<dbReference type="eggNOG" id="arCOG04387">
    <property type="taxonomic scope" value="Archaea"/>
</dbReference>
<dbReference type="HOGENOM" id="CLU_029848_0_2_2"/>
<dbReference type="OrthoDB" id="372247at2157"/>
<dbReference type="UniPathway" id="UPA00075">
    <property type="reaction ID" value="UER00335"/>
</dbReference>
<dbReference type="Proteomes" id="UP000002698">
    <property type="component" value="Chromosome"/>
</dbReference>
<dbReference type="GO" id="GO:0005737">
    <property type="term" value="C:cytoplasm"/>
    <property type="evidence" value="ECO:0007669"/>
    <property type="project" value="UniProtKB-SubCell"/>
</dbReference>
<dbReference type="GO" id="GO:0004019">
    <property type="term" value="F:adenylosuccinate synthase activity"/>
    <property type="evidence" value="ECO:0007669"/>
    <property type="project" value="UniProtKB-UniRule"/>
</dbReference>
<dbReference type="GO" id="GO:0005525">
    <property type="term" value="F:GTP binding"/>
    <property type="evidence" value="ECO:0007669"/>
    <property type="project" value="UniProtKB-UniRule"/>
</dbReference>
<dbReference type="GO" id="GO:0000287">
    <property type="term" value="F:magnesium ion binding"/>
    <property type="evidence" value="ECO:0007669"/>
    <property type="project" value="UniProtKB-UniRule"/>
</dbReference>
<dbReference type="GO" id="GO:0044208">
    <property type="term" value="P:'de novo' AMP biosynthetic process"/>
    <property type="evidence" value="ECO:0007669"/>
    <property type="project" value="UniProtKB-UniRule"/>
</dbReference>
<dbReference type="GO" id="GO:0046040">
    <property type="term" value="P:IMP metabolic process"/>
    <property type="evidence" value="ECO:0007669"/>
    <property type="project" value="TreeGrafter"/>
</dbReference>
<dbReference type="CDD" id="cd03108">
    <property type="entry name" value="AdSS"/>
    <property type="match status" value="1"/>
</dbReference>
<dbReference type="FunFam" id="1.10.300.10:FF:000001">
    <property type="entry name" value="Adenylosuccinate synthetase"/>
    <property type="match status" value="1"/>
</dbReference>
<dbReference type="FunFam" id="3.90.170.10:FF:000001">
    <property type="entry name" value="Adenylosuccinate synthetase"/>
    <property type="match status" value="1"/>
</dbReference>
<dbReference type="Gene3D" id="3.40.440.10">
    <property type="entry name" value="Adenylosuccinate Synthetase, subunit A, domain 1"/>
    <property type="match status" value="1"/>
</dbReference>
<dbReference type="Gene3D" id="1.10.300.10">
    <property type="entry name" value="Adenylosuccinate Synthetase, subunit A, domain 2"/>
    <property type="match status" value="1"/>
</dbReference>
<dbReference type="Gene3D" id="3.90.170.10">
    <property type="entry name" value="Adenylosuccinate Synthetase, subunit A, domain 3"/>
    <property type="match status" value="1"/>
</dbReference>
<dbReference type="HAMAP" id="MF_00011">
    <property type="entry name" value="Adenylosucc_synth"/>
    <property type="match status" value="1"/>
</dbReference>
<dbReference type="InterPro" id="IPR018220">
    <property type="entry name" value="Adenylosuccin_syn_GTP-bd"/>
</dbReference>
<dbReference type="InterPro" id="IPR033128">
    <property type="entry name" value="Adenylosuccin_syn_Lys_AS"/>
</dbReference>
<dbReference type="InterPro" id="IPR042109">
    <property type="entry name" value="Adenylosuccinate_synth_dom1"/>
</dbReference>
<dbReference type="InterPro" id="IPR042110">
    <property type="entry name" value="Adenylosuccinate_synth_dom2"/>
</dbReference>
<dbReference type="InterPro" id="IPR042111">
    <property type="entry name" value="Adenylosuccinate_synth_dom3"/>
</dbReference>
<dbReference type="InterPro" id="IPR001114">
    <property type="entry name" value="Adenylosuccinate_synthetase"/>
</dbReference>
<dbReference type="InterPro" id="IPR027417">
    <property type="entry name" value="P-loop_NTPase"/>
</dbReference>
<dbReference type="NCBIfam" id="NF002223">
    <property type="entry name" value="PRK01117.1"/>
    <property type="match status" value="1"/>
</dbReference>
<dbReference type="NCBIfam" id="NF010357">
    <property type="entry name" value="PRK13785.1"/>
    <property type="match status" value="1"/>
</dbReference>
<dbReference type="NCBIfam" id="TIGR00184">
    <property type="entry name" value="purA"/>
    <property type="match status" value="1"/>
</dbReference>
<dbReference type="PANTHER" id="PTHR11846">
    <property type="entry name" value="ADENYLOSUCCINATE SYNTHETASE"/>
    <property type="match status" value="1"/>
</dbReference>
<dbReference type="PANTHER" id="PTHR11846:SF0">
    <property type="entry name" value="ADENYLOSUCCINATE SYNTHETASE"/>
    <property type="match status" value="1"/>
</dbReference>
<dbReference type="Pfam" id="PF00709">
    <property type="entry name" value="Adenylsucc_synt"/>
    <property type="match status" value="1"/>
</dbReference>
<dbReference type="SMART" id="SM00788">
    <property type="entry name" value="Adenylsucc_synt"/>
    <property type="match status" value="1"/>
</dbReference>
<dbReference type="SUPFAM" id="SSF52540">
    <property type="entry name" value="P-loop containing nucleoside triphosphate hydrolases"/>
    <property type="match status" value="1"/>
</dbReference>
<dbReference type="PROSITE" id="PS01266">
    <property type="entry name" value="ADENYLOSUCCIN_SYN_1"/>
    <property type="match status" value="1"/>
</dbReference>
<dbReference type="PROSITE" id="PS00513">
    <property type="entry name" value="ADENYLOSUCCIN_SYN_2"/>
    <property type="match status" value="1"/>
</dbReference>
<protein>
    <recommendedName>
        <fullName evidence="1">Adenylosuccinate synthetase</fullName>
        <shortName evidence="1">AMPSase</shortName>
        <shortName evidence="1">AdSS</shortName>
        <ecNumber evidence="1">6.3.4.4</ecNumber>
    </recommendedName>
    <alternativeName>
        <fullName evidence="1">IMP--aspartate ligase</fullName>
    </alternativeName>
</protein>
<comment type="function">
    <text evidence="1">Plays an important role in the de novo pathway of purine nucleotide biosynthesis. Catalyzes the first committed step in the biosynthesis of AMP from IMP.</text>
</comment>
<comment type="catalytic activity">
    <reaction evidence="1">
        <text>IMP + L-aspartate + GTP = N(6)-(1,2-dicarboxyethyl)-AMP + GDP + phosphate + 2 H(+)</text>
        <dbReference type="Rhea" id="RHEA:15753"/>
        <dbReference type="ChEBI" id="CHEBI:15378"/>
        <dbReference type="ChEBI" id="CHEBI:29991"/>
        <dbReference type="ChEBI" id="CHEBI:37565"/>
        <dbReference type="ChEBI" id="CHEBI:43474"/>
        <dbReference type="ChEBI" id="CHEBI:57567"/>
        <dbReference type="ChEBI" id="CHEBI:58053"/>
        <dbReference type="ChEBI" id="CHEBI:58189"/>
        <dbReference type="EC" id="6.3.4.4"/>
    </reaction>
</comment>
<comment type="cofactor">
    <cofactor evidence="1">
        <name>Mg(2+)</name>
        <dbReference type="ChEBI" id="CHEBI:18420"/>
    </cofactor>
    <text evidence="1">Binds 1 Mg(2+) ion per subunit.</text>
</comment>
<comment type="pathway">
    <text evidence="1">Purine metabolism; AMP biosynthesis via de novo pathway; AMP from IMP: step 1/2.</text>
</comment>
<comment type="subunit">
    <text evidence="1">Homodimer.</text>
</comment>
<comment type="subcellular location">
    <subcellularLocation>
        <location evidence="1">Cytoplasm</location>
    </subcellularLocation>
</comment>
<comment type="similarity">
    <text evidence="1">Belongs to the adenylosuccinate synthetase family.</text>
</comment>
<proteinExistence type="inferred from homology"/>
<name>PURA_NATPD</name>
<gene>
    <name evidence="1" type="primary">purA</name>
    <name type="ordered locus">NP_1530A</name>
</gene>
<reference key="1">
    <citation type="journal article" date="2005" name="Genome Res.">
        <title>Living with two extremes: conclusions from the genome sequence of Natronomonas pharaonis.</title>
        <authorList>
            <person name="Falb M."/>
            <person name="Pfeiffer F."/>
            <person name="Palm P."/>
            <person name="Rodewald K."/>
            <person name="Hickmann V."/>
            <person name="Tittor J."/>
            <person name="Oesterhelt D."/>
        </authorList>
    </citation>
    <scope>NUCLEOTIDE SEQUENCE [LARGE SCALE GENOMIC DNA]</scope>
    <source>
        <strain>ATCC 35678 / DSM 2160 / CIP 103997 / JCM 8858 / NBRC 14720 / NCIMB 2260 / Gabara</strain>
    </source>
</reference>
<feature type="chain" id="PRO_0000224342" description="Adenylosuccinate synthetase">
    <location>
        <begin position="1"/>
        <end position="456"/>
    </location>
</feature>
<feature type="active site" description="Proton acceptor" evidence="1">
    <location>
        <position position="12"/>
    </location>
</feature>
<feature type="active site" description="Proton donor" evidence="1">
    <location>
        <position position="40"/>
    </location>
</feature>
<feature type="binding site" evidence="1">
    <location>
        <begin position="11"/>
        <end position="17"/>
    </location>
    <ligand>
        <name>GTP</name>
        <dbReference type="ChEBI" id="CHEBI:37565"/>
    </ligand>
</feature>
<feature type="binding site" description="in other chain" evidence="1">
    <location>
        <begin position="12"/>
        <end position="15"/>
    </location>
    <ligand>
        <name>IMP</name>
        <dbReference type="ChEBI" id="CHEBI:58053"/>
        <note>ligand shared between dimeric partners</note>
    </ligand>
</feature>
<feature type="binding site" evidence="1">
    <location>
        <position position="12"/>
    </location>
    <ligand>
        <name>Mg(2+)</name>
        <dbReference type="ChEBI" id="CHEBI:18420"/>
    </ligand>
</feature>
<feature type="binding site" description="in other chain" evidence="1">
    <location>
        <begin position="37"/>
        <end position="40"/>
    </location>
    <ligand>
        <name>IMP</name>
        <dbReference type="ChEBI" id="CHEBI:58053"/>
        <note>ligand shared between dimeric partners</note>
    </ligand>
</feature>
<feature type="binding site" evidence="1">
    <location>
        <begin position="39"/>
        <end position="41"/>
    </location>
    <ligand>
        <name>GTP</name>
        <dbReference type="ChEBI" id="CHEBI:37565"/>
    </ligand>
</feature>
<feature type="binding site" evidence="1">
    <location>
        <position position="39"/>
    </location>
    <ligand>
        <name>Mg(2+)</name>
        <dbReference type="ChEBI" id="CHEBI:18420"/>
    </ligand>
</feature>
<feature type="binding site" description="in other chain" evidence="1">
    <location>
        <position position="127"/>
    </location>
    <ligand>
        <name>IMP</name>
        <dbReference type="ChEBI" id="CHEBI:58053"/>
        <note>ligand shared between dimeric partners</note>
    </ligand>
</feature>
<feature type="binding site" evidence="1">
    <location>
        <position position="141"/>
    </location>
    <ligand>
        <name>IMP</name>
        <dbReference type="ChEBI" id="CHEBI:58053"/>
        <note>ligand shared between dimeric partners</note>
    </ligand>
</feature>
<feature type="binding site" description="in other chain" evidence="1">
    <location>
        <position position="232"/>
    </location>
    <ligand>
        <name>IMP</name>
        <dbReference type="ChEBI" id="CHEBI:58053"/>
        <note>ligand shared between dimeric partners</note>
    </ligand>
</feature>
<feature type="binding site" description="in other chain" evidence="1">
    <location>
        <position position="247"/>
    </location>
    <ligand>
        <name>IMP</name>
        <dbReference type="ChEBI" id="CHEBI:58053"/>
        <note>ligand shared between dimeric partners</note>
    </ligand>
</feature>
<feature type="binding site" evidence="1">
    <location>
        <begin position="324"/>
        <end position="330"/>
    </location>
    <ligand>
        <name>substrate</name>
    </ligand>
</feature>
<feature type="binding site" description="in other chain" evidence="1">
    <location>
        <position position="328"/>
    </location>
    <ligand>
        <name>IMP</name>
        <dbReference type="ChEBI" id="CHEBI:58053"/>
        <note>ligand shared between dimeric partners</note>
    </ligand>
</feature>
<feature type="binding site" evidence="1">
    <location>
        <position position="330"/>
    </location>
    <ligand>
        <name>GTP</name>
        <dbReference type="ChEBI" id="CHEBI:37565"/>
    </ligand>
</feature>
<feature type="binding site" evidence="1">
    <location>
        <begin position="356"/>
        <end position="358"/>
    </location>
    <ligand>
        <name>GTP</name>
        <dbReference type="ChEBI" id="CHEBI:37565"/>
    </ligand>
</feature>
<feature type="binding site" evidence="1">
    <location>
        <begin position="441"/>
        <end position="443"/>
    </location>
    <ligand>
        <name>GTP</name>
        <dbReference type="ChEBI" id="CHEBI:37565"/>
    </ligand>
</feature>
<sequence>MTVTIVGSQLGDEGKGGIVDVYGDAVDVVVRYQGGDNAGHTVVHEGDEYKLSLVPSGAVRGKVGVLGNGCVVNPETLFEELDALRERGLTPDVRVAERAHAILPYHRVLDGIEEDVKSDDDLAAGTTGRGIGPTYEDKAGRRGVRIGDLLDAETLRARLEYVVPQKRALVEDVYNLEIGDDIDADAFDVEALFEQYREFGRRLDEEGMTVNCGEFLNEHLDNGDEIMFEGAQGTSIDIDHGIYPYVTSSNPTAGAAAVGTGVGPTVVGRGEVVGIVKAYLSRVGTGPLPTELGSVDGQTPNNGGRPDESDLATYIRDEGGEYGTVTGRPRRVGWLDMPMLRHAARANGFTGLAVNHLDVLAGLEEVKVGHAYTLDGEQLLTMPATTEQWADCEAEFRSFDGWPDVDWGAVADEGYEALPENARTYLDYIADELDAPIYAVGVGPGREETVVVESPL</sequence>
<evidence type="ECO:0000255" key="1">
    <source>
        <dbReference type="HAMAP-Rule" id="MF_00011"/>
    </source>
</evidence>